<proteinExistence type="inferred from homology"/>
<keyword id="KW-0238">DNA-binding</keyword>
<keyword id="KW-0479">Metal-binding</keyword>
<keyword id="KW-0539">Nucleus</keyword>
<keyword id="KW-1185">Reference proteome</keyword>
<keyword id="KW-0804">Transcription</keyword>
<keyword id="KW-0805">Transcription regulation</keyword>
<keyword id="KW-0862">Zinc</keyword>
<reference key="1">
    <citation type="journal article" date="2007" name="Nat. Biotechnol.">
        <title>Genome sequencing and analysis of the versatile cell factory Aspergillus niger CBS 513.88.</title>
        <authorList>
            <person name="Pel H.J."/>
            <person name="de Winde J.H."/>
            <person name="Archer D.B."/>
            <person name="Dyer P.S."/>
            <person name="Hofmann G."/>
            <person name="Schaap P.J."/>
            <person name="Turner G."/>
            <person name="de Vries R.P."/>
            <person name="Albang R."/>
            <person name="Albermann K."/>
            <person name="Andersen M.R."/>
            <person name="Bendtsen J.D."/>
            <person name="Benen J.A.E."/>
            <person name="van den Berg M."/>
            <person name="Breestraat S."/>
            <person name="Caddick M.X."/>
            <person name="Contreras R."/>
            <person name="Cornell M."/>
            <person name="Coutinho P.M."/>
            <person name="Danchin E.G.J."/>
            <person name="Debets A.J.M."/>
            <person name="Dekker P."/>
            <person name="van Dijck P.W.M."/>
            <person name="van Dijk A."/>
            <person name="Dijkhuizen L."/>
            <person name="Driessen A.J.M."/>
            <person name="d'Enfert C."/>
            <person name="Geysens S."/>
            <person name="Goosen C."/>
            <person name="Groot G.S.P."/>
            <person name="de Groot P.W.J."/>
            <person name="Guillemette T."/>
            <person name="Henrissat B."/>
            <person name="Herweijer M."/>
            <person name="van den Hombergh J.P.T.W."/>
            <person name="van den Hondel C.A.M.J.J."/>
            <person name="van der Heijden R.T.J.M."/>
            <person name="van der Kaaij R.M."/>
            <person name="Klis F.M."/>
            <person name="Kools H.J."/>
            <person name="Kubicek C.P."/>
            <person name="van Kuyk P.A."/>
            <person name="Lauber J."/>
            <person name="Lu X."/>
            <person name="van der Maarel M.J.E.C."/>
            <person name="Meulenberg R."/>
            <person name="Menke H."/>
            <person name="Mortimer M.A."/>
            <person name="Nielsen J."/>
            <person name="Oliver S.G."/>
            <person name="Olsthoorn M."/>
            <person name="Pal K."/>
            <person name="van Peij N.N.M.E."/>
            <person name="Ram A.F.J."/>
            <person name="Rinas U."/>
            <person name="Roubos J.A."/>
            <person name="Sagt C.M.J."/>
            <person name="Schmoll M."/>
            <person name="Sun J."/>
            <person name="Ussery D."/>
            <person name="Varga J."/>
            <person name="Vervecken W."/>
            <person name="van de Vondervoort P.J.J."/>
            <person name="Wedler H."/>
            <person name="Woesten H.A.B."/>
            <person name="Zeng A.-P."/>
            <person name="van Ooyen A.J.J."/>
            <person name="Visser J."/>
            <person name="Stam H."/>
        </authorList>
    </citation>
    <scope>NUCLEOTIDE SEQUENCE [LARGE SCALE GENOMIC DNA]</scope>
    <source>
        <strain>ATCC MYA-4892 / CBS 513.88 / FGSC A1513</strain>
    </source>
</reference>
<reference key="2">
    <citation type="journal article" date="2008" name="Fungal Genet. Biol.">
        <title>Characterization of the Aspergillus niger prtT, a unique regulator of extracellular protease encoding genes.</title>
        <authorList>
            <person name="Punt P.J."/>
            <person name="Schuren F.H."/>
            <person name="Lehmbeck J."/>
            <person name="Christensen T."/>
            <person name="Hjort C."/>
            <person name="van den Hondel C.A."/>
        </authorList>
    </citation>
    <scope>FUNCTION</scope>
</reference>
<feature type="chain" id="PRO_0000407033" description="Transcriptional activator of proteases prtT">
    <location>
        <begin position="1"/>
        <end position="623"/>
    </location>
</feature>
<feature type="DNA-binding region" description="Zn(2)-C6 fungal-type" evidence="1">
    <location>
        <begin position="50"/>
        <end position="79"/>
    </location>
</feature>
<dbReference type="EMBL" id="AM270080">
    <property type="protein sequence ID" value="CAK44694.1"/>
    <property type="molecule type" value="Genomic_DNA"/>
</dbReference>
<dbReference type="RefSeq" id="XP_001402055.1">
    <property type="nucleotide sequence ID" value="XM_001402018.2"/>
</dbReference>
<dbReference type="EnsemblFungi" id="CAK44694">
    <property type="protein sequence ID" value="CAK44694"/>
    <property type="gene ID" value="An04g06940"/>
</dbReference>
<dbReference type="GeneID" id="4991098"/>
<dbReference type="KEGG" id="ang:An04g06940"/>
<dbReference type="VEuPathDB" id="FungiDB:An04g06940"/>
<dbReference type="HOGENOM" id="CLU_030102_0_0_1"/>
<dbReference type="Proteomes" id="UP000006706">
    <property type="component" value="Chromosome 6L"/>
</dbReference>
<dbReference type="GO" id="GO:0005634">
    <property type="term" value="C:nucleus"/>
    <property type="evidence" value="ECO:0007669"/>
    <property type="project" value="UniProtKB-SubCell"/>
</dbReference>
<dbReference type="GO" id="GO:0000981">
    <property type="term" value="F:DNA-binding transcription factor activity, RNA polymerase II-specific"/>
    <property type="evidence" value="ECO:0007669"/>
    <property type="project" value="InterPro"/>
</dbReference>
<dbReference type="GO" id="GO:0000976">
    <property type="term" value="F:transcription cis-regulatory region binding"/>
    <property type="evidence" value="ECO:0007669"/>
    <property type="project" value="TreeGrafter"/>
</dbReference>
<dbReference type="GO" id="GO:0008270">
    <property type="term" value="F:zinc ion binding"/>
    <property type="evidence" value="ECO:0007669"/>
    <property type="project" value="InterPro"/>
</dbReference>
<dbReference type="GO" id="GO:0045893">
    <property type="term" value="P:positive regulation of DNA-templated transcription"/>
    <property type="evidence" value="ECO:0000315"/>
    <property type="project" value="UniProtKB"/>
</dbReference>
<dbReference type="GO" id="GO:0042176">
    <property type="term" value="P:regulation of protein catabolic process"/>
    <property type="evidence" value="ECO:0000315"/>
    <property type="project" value="UniProtKB"/>
</dbReference>
<dbReference type="CDD" id="cd12148">
    <property type="entry name" value="fungal_TF_MHR"/>
    <property type="match status" value="1"/>
</dbReference>
<dbReference type="CDD" id="cd00067">
    <property type="entry name" value="GAL4"/>
    <property type="match status" value="1"/>
</dbReference>
<dbReference type="FunFam" id="4.10.240.10:FF:000011">
    <property type="entry name" value="Transcriptional activator of proteases prtT"/>
    <property type="match status" value="1"/>
</dbReference>
<dbReference type="Gene3D" id="4.10.240.10">
    <property type="entry name" value="Zn(2)-C6 fungal-type DNA-binding domain"/>
    <property type="match status" value="1"/>
</dbReference>
<dbReference type="InterPro" id="IPR051089">
    <property type="entry name" value="prtT"/>
</dbReference>
<dbReference type="InterPro" id="IPR036864">
    <property type="entry name" value="Zn2-C6_fun-type_DNA-bd_sf"/>
</dbReference>
<dbReference type="InterPro" id="IPR001138">
    <property type="entry name" value="Zn2Cys6_DnaBD"/>
</dbReference>
<dbReference type="PANTHER" id="PTHR31845">
    <property type="entry name" value="FINGER DOMAIN PROTEIN, PUTATIVE-RELATED"/>
    <property type="match status" value="1"/>
</dbReference>
<dbReference type="PANTHER" id="PTHR31845:SF34">
    <property type="entry name" value="TRANSCRIPTIONAL ACTIVATOR OF PROTEASES PRTT"/>
    <property type="match status" value="1"/>
</dbReference>
<dbReference type="Pfam" id="PF00172">
    <property type="entry name" value="Zn_clus"/>
    <property type="match status" value="1"/>
</dbReference>
<dbReference type="SMART" id="SM00066">
    <property type="entry name" value="GAL4"/>
    <property type="match status" value="1"/>
</dbReference>
<dbReference type="SUPFAM" id="SSF57701">
    <property type="entry name" value="Zn2/Cys6 DNA-binding domain"/>
    <property type="match status" value="1"/>
</dbReference>
<dbReference type="PROSITE" id="PS00463">
    <property type="entry name" value="ZN2_CY6_FUNGAL_1"/>
    <property type="match status" value="1"/>
</dbReference>
<dbReference type="PROSITE" id="PS50048">
    <property type="entry name" value="ZN2_CY6_FUNGAL_2"/>
    <property type="match status" value="1"/>
</dbReference>
<comment type="function">
    <text evidence="2">Transcription factor required for protein utilization and degradation. Regulates transcription of major secreted proteases.</text>
</comment>
<comment type="subcellular location">
    <subcellularLocation>
        <location evidence="1">Nucleus</location>
    </subcellularLocation>
</comment>
<comment type="similarity">
    <text evidence="3">Belongs to the prtT family.</text>
</comment>
<name>PRTT_ASPNC</name>
<accession>A2QJF9</accession>
<organism>
    <name type="scientific">Aspergillus niger (strain ATCC MYA-4892 / CBS 513.88 / FGSC A1513)</name>
    <dbReference type="NCBI Taxonomy" id="425011"/>
    <lineage>
        <taxon>Eukaryota</taxon>
        <taxon>Fungi</taxon>
        <taxon>Dikarya</taxon>
        <taxon>Ascomycota</taxon>
        <taxon>Pezizomycotina</taxon>
        <taxon>Eurotiomycetes</taxon>
        <taxon>Eurotiomycetidae</taxon>
        <taxon>Eurotiales</taxon>
        <taxon>Aspergillaceae</taxon>
        <taxon>Aspergillus</taxon>
        <taxon>Aspergillus subgen. Circumdati</taxon>
    </lineage>
</organism>
<sequence>MTRTVDEIKYETPSSWEHKSLDVAEDGRRLAPHSDTARPKGRIRRSMTACHTCRKLKTRCDLDPRGHACRRCLSLRIDCKLPETTDRFQDSAAMWPDATSAIPSIEERLTSLERCMREMTGMMRQMLDHSPGFANASVPHLTKSIITDENASMEGSPSSPFLPKPVRLIQDLQSDFFGEAETSPVDSPLSSDGNAKGAIDSKLSLKLLQTFVDHFGACVSIYNLSDIHNDMKAPDSLLYNTACLLASRYVPGIPTSTVHAIYLQVRHAVVNILWEKPPLKYETLQALALLCLWPATAQKEPPMDSWLLSGISINHAIIALDFLNYAPSEVMVDNETAAQLRLWNTYCLTQLHFAVGNARPFHIQQRYLDHCPRILEHPAATLEDARVVAEIQLYLMTLRLQSNSSRMRLADLDYEEIERWKREWAHLFSGESSTLELSLWFCQTLLHRTAMRLQPRSDRLASEVLQTSRLIISRFLQIRYSTALSLVDQVYFIVGYAALNLCDFNLMDPLIEQVQMFLLHLSPNEDHIAYRFSCMVAEFKRRCGSAECNDPSSTVKGSPLSSYGDSRKMSMGQAPFMPPLMDGMIEGYGFEQLMPEVMPSSFPDGILNGMPVTGLAAYRSATL</sequence>
<protein>
    <recommendedName>
        <fullName>Transcriptional activator of proteases prtT</fullName>
    </recommendedName>
    <alternativeName>
        <fullName>Zn(2)-C6 zinc finger-containing protein prtT</fullName>
    </alternativeName>
</protein>
<gene>
    <name type="primary">prtT</name>
    <name type="ORF">An04g06940</name>
</gene>
<evidence type="ECO:0000255" key="1">
    <source>
        <dbReference type="PROSITE-ProRule" id="PRU00227"/>
    </source>
</evidence>
<evidence type="ECO:0000269" key="2">
    <source>
    </source>
</evidence>
<evidence type="ECO:0000305" key="3"/>